<gene>
    <name evidence="1" type="primary">plsY1</name>
    <name type="ordered locus">Moth_1217</name>
</gene>
<sequence>MLSWTVILTGIFMAYAVGSLAGGHFLSKILYNADVRQVGSGNAGTMNVLRNLGIAAGIMTFIWDTAKGFLVVTLGLKGGGAELGVLMALAAVAGHNWPLYWRFQGGKGLATSLGVALAVYPAAVPPGAALMGLLTFLTRNTDLATLLTFSALPIYFWWREGPGCYLAFGLGLAAIMLLRHGPLVISLFYNLKERR</sequence>
<proteinExistence type="inferred from homology"/>
<protein>
    <recommendedName>
        <fullName evidence="1">Glycerol-3-phosphate acyltransferase 1</fullName>
    </recommendedName>
    <alternativeName>
        <fullName evidence="1">Acyl-PO4 G3P acyltransferase 1</fullName>
    </alternativeName>
    <alternativeName>
        <fullName evidence="1">Acyl-phosphate--glycerol-3-phosphate acyltransferase 1</fullName>
    </alternativeName>
    <alternativeName>
        <fullName evidence="1">G3P acyltransferase 1</fullName>
        <shortName evidence="1">GPAT 1</shortName>
        <ecNumber evidence="1">2.3.1.275</ecNumber>
    </alternativeName>
    <alternativeName>
        <fullName evidence="1">Lysophosphatidic acid synthase 1</fullName>
        <shortName evidence="1">LPA synthase 1</shortName>
    </alternativeName>
</protein>
<accession>Q2RJ58</accession>
<feature type="chain" id="PRO_0000250311" description="Glycerol-3-phosphate acyltransferase 1">
    <location>
        <begin position="1"/>
        <end position="195"/>
    </location>
</feature>
<feature type="transmembrane region" description="Helical" evidence="1">
    <location>
        <begin position="6"/>
        <end position="26"/>
    </location>
</feature>
<feature type="transmembrane region" description="Helical" evidence="1">
    <location>
        <begin position="52"/>
        <end position="72"/>
    </location>
</feature>
<feature type="transmembrane region" description="Helical" evidence="1">
    <location>
        <begin position="74"/>
        <end position="94"/>
    </location>
</feature>
<feature type="transmembrane region" description="Helical" evidence="1">
    <location>
        <begin position="117"/>
        <end position="137"/>
    </location>
</feature>
<feature type="transmembrane region" description="Helical" evidence="1">
    <location>
        <begin position="168"/>
        <end position="188"/>
    </location>
</feature>
<evidence type="ECO:0000255" key="1">
    <source>
        <dbReference type="HAMAP-Rule" id="MF_01043"/>
    </source>
</evidence>
<dbReference type="EC" id="2.3.1.275" evidence="1"/>
<dbReference type="EMBL" id="CP000232">
    <property type="protein sequence ID" value="ABC19531.1"/>
    <property type="molecule type" value="Genomic_DNA"/>
</dbReference>
<dbReference type="RefSeq" id="YP_430074.1">
    <property type="nucleotide sequence ID" value="NC_007644.1"/>
</dbReference>
<dbReference type="SMR" id="Q2RJ58"/>
<dbReference type="STRING" id="264732.Moth_1217"/>
<dbReference type="EnsemblBacteria" id="ABC19531">
    <property type="protein sequence ID" value="ABC19531"/>
    <property type="gene ID" value="Moth_1217"/>
</dbReference>
<dbReference type="KEGG" id="mta:Moth_1217"/>
<dbReference type="PATRIC" id="fig|264732.11.peg.1306"/>
<dbReference type="eggNOG" id="COG0344">
    <property type="taxonomic scope" value="Bacteria"/>
</dbReference>
<dbReference type="HOGENOM" id="CLU_081254_7_2_9"/>
<dbReference type="OrthoDB" id="9777124at2"/>
<dbReference type="UniPathway" id="UPA00085"/>
<dbReference type="GO" id="GO:0005886">
    <property type="term" value="C:plasma membrane"/>
    <property type="evidence" value="ECO:0007669"/>
    <property type="project" value="UniProtKB-SubCell"/>
</dbReference>
<dbReference type="GO" id="GO:0043772">
    <property type="term" value="F:acyl-phosphate glycerol-3-phosphate acyltransferase activity"/>
    <property type="evidence" value="ECO:0007669"/>
    <property type="project" value="UniProtKB-UniRule"/>
</dbReference>
<dbReference type="GO" id="GO:0008654">
    <property type="term" value="P:phospholipid biosynthetic process"/>
    <property type="evidence" value="ECO:0007669"/>
    <property type="project" value="UniProtKB-UniRule"/>
</dbReference>
<dbReference type="HAMAP" id="MF_01043">
    <property type="entry name" value="PlsY"/>
    <property type="match status" value="1"/>
</dbReference>
<dbReference type="InterPro" id="IPR003811">
    <property type="entry name" value="G3P_acylTferase_PlsY"/>
</dbReference>
<dbReference type="PANTHER" id="PTHR30309:SF0">
    <property type="entry name" value="GLYCEROL-3-PHOSPHATE ACYLTRANSFERASE-RELATED"/>
    <property type="match status" value="1"/>
</dbReference>
<dbReference type="PANTHER" id="PTHR30309">
    <property type="entry name" value="INNER MEMBRANE PROTEIN YGIH"/>
    <property type="match status" value="1"/>
</dbReference>
<dbReference type="Pfam" id="PF02660">
    <property type="entry name" value="G3P_acyltransf"/>
    <property type="match status" value="1"/>
</dbReference>
<dbReference type="SMART" id="SM01207">
    <property type="entry name" value="G3P_acyltransf"/>
    <property type="match status" value="1"/>
</dbReference>
<organism>
    <name type="scientific">Moorella thermoacetica (strain ATCC 39073 / JCM 9320)</name>
    <dbReference type="NCBI Taxonomy" id="264732"/>
    <lineage>
        <taxon>Bacteria</taxon>
        <taxon>Bacillati</taxon>
        <taxon>Bacillota</taxon>
        <taxon>Clostridia</taxon>
        <taxon>Moorellales</taxon>
        <taxon>Moorellaceae</taxon>
        <taxon>Moorella</taxon>
    </lineage>
</organism>
<name>PLSY1_MOOTA</name>
<comment type="function">
    <text evidence="1">Catalyzes the transfer of an acyl group from acyl-phosphate (acyl-PO(4)) to glycerol-3-phosphate (G3P) to form lysophosphatidic acid (LPA). This enzyme utilizes acyl-phosphate as fatty acyl donor, but not acyl-CoA or acyl-ACP.</text>
</comment>
<comment type="catalytic activity">
    <reaction evidence="1">
        <text>an acyl phosphate + sn-glycerol 3-phosphate = a 1-acyl-sn-glycero-3-phosphate + phosphate</text>
        <dbReference type="Rhea" id="RHEA:34075"/>
        <dbReference type="ChEBI" id="CHEBI:43474"/>
        <dbReference type="ChEBI" id="CHEBI:57597"/>
        <dbReference type="ChEBI" id="CHEBI:57970"/>
        <dbReference type="ChEBI" id="CHEBI:59918"/>
        <dbReference type="EC" id="2.3.1.275"/>
    </reaction>
</comment>
<comment type="pathway">
    <text evidence="1">Lipid metabolism; phospholipid metabolism.</text>
</comment>
<comment type="subunit">
    <text evidence="1">Probably interacts with PlsX.</text>
</comment>
<comment type="subcellular location">
    <subcellularLocation>
        <location evidence="1">Cell membrane</location>
        <topology evidence="1">Multi-pass membrane protein</topology>
    </subcellularLocation>
</comment>
<comment type="similarity">
    <text evidence="1">Belongs to the PlsY family.</text>
</comment>
<reference key="1">
    <citation type="journal article" date="2008" name="Environ. Microbiol.">
        <title>The complete genome sequence of Moorella thermoacetica (f. Clostridium thermoaceticum).</title>
        <authorList>
            <person name="Pierce E."/>
            <person name="Xie G."/>
            <person name="Barabote R.D."/>
            <person name="Saunders E."/>
            <person name="Han C.S."/>
            <person name="Detter J.C."/>
            <person name="Richardson P."/>
            <person name="Brettin T.S."/>
            <person name="Das A."/>
            <person name="Ljungdahl L.G."/>
            <person name="Ragsdale S.W."/>
        </authorList>
    </citation>
    <scope>NUCLEOTIDE SEQUENCE [LARGE SCALE GENOMIC DNA]</scope>
    <source>
        <strain>ATCC 39073 / JCM 9320</strain>
    </source>
</reference>
<keyword id="KW-1003">Cell membrane</keyword>
<keyword id="KW-0444">Lipid biosynthesis</keyword>
<keyword id="KW-0443">Lipid metabolism</keyword>
<keyword id="KW-0472">Membrane</keyword>
<keyword id="KW-0594">Phospholipid biosynthesis</keyword>
<keyword id="KW-1208">Phospholipid metabolism</keyword>
<keyword id="KW-0808">Transferase</keyword>
<keyword id="KW-0812">Transmembrane</keyword>
<keyword id="KW-1133">Transmembrane helix</keyword>